<keyword id="KW-0240">DNA-directed RNA polymerase</keyword>
<keyword id="KW-0548">Nucleotidyltransferase</keyword>
<keyword id="KW-1185">Reference proteome</keyword>
<keyword id="KW-0804">Transcription</keyword>
<keyword id="KW-0808">Transferase</keyword>
<evidence type="ECO:0000255" key="1">
    <source>
        <dbReference type="HAMAP-Rule" id="MF_00357"/>
    </source>
</evidence>
<evidence type="ECO:0000255" key="2">
    <source>
        <dbReference type="PROSITE-ProRule" id="PRU01261"/>
    </source>
</evidence>
<evidence type="ECO:0000256" key="3">
    <source>
        <dbReference type="SAM" id="MobiDB-lite"/>
    </source>
</evidence>
<accession>A5VI25</accession>
<feature type="chain" id="PRO_1000059840" description="Probable DNA-directed RNA polymerase subunit delta">
    <location>
        <begin position="1"/>
        <end position="185"/>
    </location>
</feature>
<feature type="domain" description="HTH HARE-type" evidence="2">
    <location>
        <begin position="14"/>
        <end position="81"/>
    </location>
</feature>
<feature type="region of interest" description="Disordered" evidence="3">
    <location>
        <begin position="90"/>
        <end position="185"/>
    </location>
</feature>
<feature type="compositionally biased region" description="Acidic residues" evidence="3">
    <location>
        <begin position="117"/>
        <end position="167"/>
    </location>
</feature>
<feature type="compositionally biased region" description="Acidic residues" evidence="3">
    <location>
        <begin position="175"/>
        <end position="185"/>
    </location>
</feature>
<reference key="1">
    <citation type="journal article" date="2011" name="PLoS Genet.">
        <title>The evolution of host specialization in the vertebrate gut symbiont Lactobacillus reuteri.</title>
        <authorList>
            <person name="Frese S.A."/>
            <person name="Benson A.K."/>
            <person name="Tannock G.W."/>
            <person name="Loach D.M."/>
            <person name="Kim J."/>
            <person name="Zhang M."/>
            <person name="Oh P.L."/>
            <person name="Heng N.C."/>
            <person name="Patil P.B."/>
            <person name="Juge N."/>
            <person name="Mackenzie D.A."/>
            <person name="Pearson B.M."/>
            <person name="Lapidus A."/>
            <person name="Dalin E."/>
            <person name="Tice H."/>
            <person name="Goltsman E."/>
            <person name="Land M."/>
            <person name="Hauser L."/>
            <person name="Ivanova N."/>
            <person name="Kyrpides N.C."/>
            <person name="Walter J."/>
        </authorList>
    </citation>
    <scope>NUCLEOTIDE SEQUENCE [LARGE SCALE GENOMIC DNA]</scope>
    <source>
        <strain>DSM 20016</strain>
    </source>
</reference>
<comment type="function">
    <text evidence="1">Participates in both the initiation and recycling phases of transcription. In the presence of the delta subunit, RNAP displays an increased specificity of transcription, a decreased affinity for nucleic acids, and an increased efficiency of RNA synthesis because of enhanced recycling.</text>
</comment>
<comment type="subunit">
    <text evidence="1">RNAP is composed of a core of 2 alpha, a beta and a beta' subunits. The core is associated with a delta subunit and one of several sigma factors.</text>
</comment>
<comment type="similarity">
    <text evidence="1">Belongs to the RpoE family.</text>
</comment>
<gene>
    <name evidence="1" type="primary">rpoE</name>
    <name type="ordered locus">Lreu_0229</name>
</gene>
<protein>
    <recommendedName>
        <fullName evidence="1">Probable DNA-directed RNA polymerase subunit delta</fullName>
    </recommendedName>
    <alternativeName>
        <fullName evidence="1">RNAP delta factor</fullName>
    </alternativeName>
</protein>
<sequence>MDLKVFDGQDKSELSMIEVAHAILAHHGKAMAFVDLTNEVQQYLGKSDEEIRERLAQFYTDLNVDGSFISLGDNTWGLRAWYPFESIDEATVGENEEDEEDDRPKKKRRKVNAFLADTDDDDDVIDYDNDDPEDEDLDTDDDADSEDDYDDDTDDFSDDDDDLDDGIEGQLSELHDEEDEDEDDE</sequence>
<organism>
    <name type="scientific">Limosilactobacillus reuteri (strain DSM 20016)</name>
    <name type="common">Lactobacillus reuteri</name>
    <dbReference type="NCBI Taxonomy" id="557436"/>
    <lineage>
        <taxon>Bacteria</taxon>
        <taxon>Bacillati</taxon>
        <taxon>Bacillota</taxon>
        <taxon>Bacilli</taxon>
        <taxon>Lactobacillales</taxon>
        <taxon>Lactobacillaceae</taxon>
        <taxon>Limosilactobacillus</taxon>
    </lineage>
</organism>
<dbReference type="EMBL" id="CP000705">
    <property type="protein sequence ID" value="ABQ82499.1"/>
    <property type="molecule type" value="Genomic_DNA"/>
</dbReference>
<dbReference type="RefSeq" id="WP_011953385.1">
    <property type="nucleotide sequence ID" value="NC_009513.1"/>
</dbReference>
<dbReference type="SMR" id="A5VI25"/>
<dbReference type="STRING" id="557436.Lreu_0229"/>
<dbReference type="KEGG" id="lre:Lreu_0229"/>
<dbReference type="PATRIC" id="fig|557436.17.peg.1770"/>
<dbReference type="eggNOG" id="COG3343">
    <property type="taxonomic scope" value="Bacteria"/>
</dbReference>
<dbReference type="HOGENOM" id="CLU_116648_0_0_9"/>
<dbReference type="Proteomes" id="UP000001991">
    <property type="component" value="Chromosome"/>
</dbReference>
<dbReference type="GO" id="GO:0000428">
    <property type="term" value="C:DNA-directed RNA polymerase complex"/>
    <property type="evidence" value="ECO:0007669"/>
    <property type="project" value="UniProtKB-KW"/>
</dbReference>
<dbReference type="GO" id="GO:0003899">
    <property type="term" value="F:DNA-directed RNA polymerase activity"/>
    <property type="evidence" value="ECO:0007669"/>
    <property type="project" value="UniProtKB-UniRule"/>
</dbReference>
<dbReference type="GO" id="GO:0006351">
    <property type="term" value="P:DNA-templated transcription"/>
    <property type="evidence" value="ECO:0007669"/>
    <property type="project" value="InterPro"/>
</dbReference>
<dbReference type="GO" id="GO:0006355">
    <property type="term" value="P:regulation of DNA-templated transcription"/>
    <property type="evidence" value="ECO:0007669"/>
    <property type="project" value="UniProtKB-UniRule"/>
</dbReference>
<dbReference type="Gene3D" id="1.10.10.1250">
    <property type="entry name" value="RNA polymerase, subunit delta, N-terminal domain"/>
    <property type="match status" value="1"/>
</dbReference>
<dbReference type="HAMAP" id="MF_00357">
    <property type="entry name" value="RNApol_bact_RpoE"/>
    <property type="match status" value="1"/>
</dbReference>
<dbReference type="InterPro" id="IPR007759">
    <property type="entry name" value="Asxl_HARE-HTH"/>
</dbReference>
<dbReference type="InterPro" id="IPR038087">
    <property type="entry name" value="RNAP_delta_N_dom_sf"/>
</dbReference>
<dbReference type="InterPro" id="IPR029757">
    <property type="entry name" value="RpoE"/>
</dbReference>
<dbReference type="NCBIfam" id="TIGR04567">
    <property type="entry name" value="RNAP_delt_lowGC"/>
    <property type="match status" value="1"/>
</dbReference>
<dbReference type="Pfam" id="PF05066">
    <property type="entry name" value="HARE-HTH"/>
    <property type="match status" value="1"/>
</dbReference>
<dbReference type="PROSITE" id="PS51913">
    <property type="entry name" value="HTH_HARE"/>
    <property type="match status" value="1"/>
</dbReference>
<proteinExistence type="inferred from homology"/>
<name>RPOE_LIMRD</name>